<reference key="1">
    <citation type="journal article" date="1986" name="J. Mol. Biol.">
        <title>Interspecific nucleotide sequence comparisons used to identify regulatory and structural features of the Drosophila hsp82 gene.</title>
        <authorList>
            <person name="Blackman R.K."/>
            <person name="Meselson M."/>
        </authorList>
    </citation>
    <scope>NUCLEOTIDE SEQUENCE [GENOMIC DNA]</scope>
</reference>
<keyword id="KW-0067">ATP-binding</keyword>
<keyword id="KW-0143">Chaperone</keyword>
<keyword id="KW-0963">Cytoplasm</keyword>
<keyword id="KW-0547">Nucleotide-binding</keyword>
<keyword id="KW-0346">Stress response</keyword>
<evidence type="ECO:0000250" key="1"/>
<evidence type="ECO:0000256" key="2">
    <source>
        <dbReference type="SAM" id="MobiDB-lite"/>
    </source>
</evidence>
<evidence type="ECO:0000305" key="3"/>
<protein>
    <recommendedName>
        <fullName>Heat shock protein 83</fullName>
    </recommendedName>
    <alternativeName>
        <fullName>HSP 82</fullName>
    </alternativeName>
</protein>
<dbReference type="EMBL" id="X03811">
    <property type="protein sequence ID" value="CAA27438.1"/>
    <property type="molecule type" value="Genomic_DNA"/>
</dbReference>
<dbReference type="PIR" id="B24827">
    <property type="entry name" value="B24827"/>
</dbReference>
<dbReference type="SMR" id="P04810"/>
<dbReference type="EnsemblMetazoa" id="FBtr0213649">
    <property type="protein sequence ID" value="FBpp0212141"/>
    <property type="gene ID" value="FBgn0012840"/>
</dbReference>
<dbReference type="EnsemblMetazoa" id="XM_016170758.2">
    <property type="protein sequence ID" value="XP_016030187.1"/>
    <property type="gene ID" value="LOC6736591"/>
</dbReference>
<dbReference type="OrthoDB" id="5426351at2759"/>
<dbReference type="ChiTaRS" id="Hsp83">
    <property type="organism name" value="fly"/>
</dbReference>
<dbReference type="Bgee" id="FBgn0012840">
    <property type="expression patterns" value="Expressed in embryo and 3 other cell types or tissues"/>
</dbReference>
<dbReference type="GO" id="GO:0005813">
    <property type="term" value="C:centrosome"/>
    <property type="evidence" value="ECO:0007669"/>
    <property type="project" value="EnsemblMetazoa"/>
</dbReference>
<dbReference type="GO" id="GO:0034663">
    <property type="term" value="C:endoplasmic reticulum chaperone complex"/>
    <property type="evidence" value="ECO:0007669"/>
    <property type="project" value="EnsemblMetazoa"/>
</dbReference>
<dbReference type="GO" id="GO:0048471">
    <property type="term" value="C:perinuclear region of cytoplasm"/>
    <property type="evidence" value="ECO:0007669"/>
    <property type="project" value="EnsemblMetazoa"/>
</dbReference>
<dbReference type="GO" id="GO:0005705">
    <property type="term" value="C:polytene chromosome interband"/>
    <property type="evidence" value="ECO:0007669"/>
    <property type="project" value="EnsemblMetazoa"/>
</dbReference>
<dbReference type="GO" id="GO:0101031">
    <property type="term" value="C:protein folding chaperone complex"/>
    <property type="evidence" value="ECO:0007669"/>
    <property type="project" value="EnsemblMetazoa"/>
</dbReference>
<dbReference type="GO" id="GO:0005524">
    <property type="term" value="F:ATP binding"/>
    <property type="evidence" value="ECO:0007669"/>
    <property type="project" value="UniProtKB-KW"/>
</dbReference>
<dbReference type="GO" id="GO:0016887">
    <property type="term" value="F:ATP hydrolysis activity"/>
    <property type="evidence" value="ECO:0007669"/>
    <property type="project" value="InterPro"/>
</dbReference>
<dbReference type="GO" id="GO:0140662">
    <property type="term" value="F:ATP-dependent protein folding chaperone"/>
    <property type="evidence" value="ECO:0007669"/>
    <property type="project" value="InterPro"/>
</dbReference>
<dbReference type="GO" id="GO:0005158">
    <property type="term" value="F:insulin receptor binding"/>
    <property type="evidence" value="ECO:0007669"/>
    <property type="project" value="EnsemblMetazoa"/>
</dbReference>
<dbReference type="GO" id="GO:0030911">
    <property type="term" value="F:TPR domain binding"/>
    <property type="evidence" value="ECO:0007669"/>
    <property type="project" value="EnsemblMetazoa"/>
</dbReference>
<dbReference type="GO" id="GO:0051082">
    <property type="term" value="F:unfolded protein binding"/>
    <property type="evidence" value="ECO:0007669"/>
    <property type="project" value="EnsemblMetazoa"/>
</dbReference>
<dbReference type="GO" id="GO:0007098">
    <property type="term" value="P:centrosome cycle"/>
    <property type="evidence" value="ECO:0007669"/>
    <property type="project" value="EnsemblMetazoa"/>
</dbReference>
<dbReference type="GO" id="GO:0009631">
    <property type="term" value="P:cold acclimation"/>
    <property type="evidence" value="ECO:0007669"/>
    <property type="project" value="EnsemblMetazoa"/>
</dbReference>
<dbReference type="GO" id="GO:0097753">
    <property type="term" value="P:membrane bending"/>
    <property type="evidence" value="ECO:0007669"/>
    <property type="project" value="EnsemblMetazoa"/>
</dbReference>
<dbReference type="GO" id="GO:0098866">
    <property type="term" value="P:multivesicular body fusion to apical plasma membrane"/>
    <property type="evidence" value="ECO:0007669"/>
    <property type="project" value="EnsemblMetazoa"/>
</dbReference>
<dbReference type="GO" id="GO:0008285">
    <property type="term" value="P:negative regulation of cell population proliferation"/>
    <property type="evidence" value="ECO:0007669"/>
    <property type="project" value="EnsemblMetazoa"/>
</dbReference>
<dbReference type="GO" id="GO:0019094">
    <property type="term" value="P:pole plasm mRNA localization"/>
    <property type="evidence" value="ECO:0007669"/>
    <property type="project" value="EnsemblMetazoa"/>
</dbReference>
<dbReference type="GO" id="GO:0046628">
    <property type="term" value="P:positive regulation of insulin receptor signaling pathway"/>
    <property type="evidence" value="ECO:0007669"/>
    <property type="project" value="EnsemblMetazoa"/>
</dbReference>
<dbReference type="GO" id="GO:0002052">
    <property type="term" value="P:positive regulation of neuroblast proliferation"/>
    <property type="evidence" value="ECO:0007669"/>
    <property type="project" value="EnsemblMetazoa"/>
</dbReference>
<dbReference type="GO" id="GO:0043248">
    <property type="term" value="P:proteasome assembly"/>
    <property type="evidence" value="ECO:0007669"/>
    <property type="project" value="EnsemblMetazoa"/>
</dbReference>
<dbReference type="GO" id="GO:0045187">
    <property type="term" value="P:regulation of circadian sleep/wake cycle, sleep"/>
    <property type="evidence" value="ECO:0007669"/>
    <property type="project" value="EnsemblMetazoa"/>
</dbReference>
<dbReference type="GO" id="GO:0009408">
    <property type="term" value="P:response to heat"/>
    <property type="evidence" value="ECO:0007669"/>
    <property type="project" value="EnsemblMetazoa"/>
</dbReference>
<dbReference type="GO" id="GO:0070922">
    <property type="term" value="P:RISC complex assembly"/>
    <property type="evidence" value="ECO:0007669"/>
    <property type="project" value="EnsemblMetazoa"/>
</dbReference>
<dbReference type="CDD" id="cd16927">
    <property type="entry name" value="HATPase_Hsp90-like"/>
    <property type="match status" value="1"/>
</dbReference>
<dbReference type="FunFam" id="3.30.230.80:FF:000011">
    <property type="entry name" value="Heat shock protein"/>
    <property type="match status" value="1"/>
</dbReference>
<dbReference type="FunFam" id="3.30.565.10:FF:000001">
    <property type="entry name" value="Heat shock protein HSP 90-alpha"/>
    <property type="match status" value="1"/>
</dbReference>
<dbReference type="Gene3D" id="3.30.230.80">
    <property type="match status" value="1"/>
</dbReference>
<dbReference type="Gene3D" id="3.30.565.10">
    <property type="entry name" value="Histidine kinase-like ATPase, C-terminal domain"/>
    <property type="match status" value="1"/>
</dbReference>
<dbReference type="InterPro" id="IPR036890">
    <property type="entry name" value="HATPase_C_sf"/>
</dbReference>
<dbReference type="InterPro" id="IPR019805">
    <property type="entry name" value="Heat_shock_protein_90_CS"/>
</dbReference>
<dbReference type="InterPro" id="IPR001404">
    <property type="entry name" value="Hsp90_fam"/>
</dbReference>
<dbReference type="InterPro" id="IPR020575">
    <property type="entry name" value="Hsp90_N"/>
</dbReference>
<dbReference type="InterPro" id="IPR020568">
    <property type="entry name" value="Ribosomal_Su5_D2-typ_SF"/>
</dbReference>
<dbReference type="NCBIfam" id="NF003555">
    <property type="entry name" value="PRK05218.1"/>
    <property type="match status" value="1"/>
</dbReference>
<dbReference type="PANTHER" id="PTHR11528">
    <property type="entry name" value="HEAT SHOCK PROTEIN 90 FAMILY MEMBER"/>
    <property type="match status" value="1"/>
</dbReference>
<dbReference type="Pfam" id="PF13589">
    <property type="entry name" value="HATPase_c_3"/>
    <property type="match status" value="1"/>
</dbReference>
<dbReference type="Pfam" id="PF00183">
    <property type="entry name" value="HSP90"/>
    <property type="match status" value="1"/>
</dbReference>
<dbReference type="PRINTS" id="PR00775">
    <property type="entry name" value="HEATSHOCK90"/>
</dbReference>
<dbReference type="SMART" id="SM00387">
    <property type="entry name" value="HATPase_c"/>
    <property type="match status" value="1"/>
</dbReference>
<dbReference type="SUPFAM" id="SSF55874">
    <property type="entry name" value="ATPase domain of HSP90 chaperone/DNA topoisomerase II/histidine kinase"/>
    <property type="match status" value="1"/>
</dbReference>
<dbReference type="SUPFAM" id="SSF54211">
    <property type="entry name" value="Ribosomal protein S5 domain 2-like"/>
    <property type="match status" value="1"/>
</dbReference>
<dbReference type="PROSITE" id="PS00298">
    <property type="entry name" value="HSP90"/>
    <property type="match status" value="1"/>
</dbReference>
<gene>
    <name type="primary">Hsp83</name>
    <name type="synonym">Hsp82</name>
</gene>
<name>HSP83_DROSI</name>
<feature type="chain" id="PRO_0000062935" description="Heat shock protein 83">
    <location>
        <begin position="1"/>
        <end position="375" status="greater than"/>
    </location>
</feature>
<feature type="region of interest" description="Disordered" evidence="2">
    <location>
        <begin position="213"/>
        <end position="263"/>
    </location>
</feature>
<feature type="compositionally biased region" description="Basic and acidic residues" evidence="2">
    <location>
        <begin position="225"/>
        <end position="245"/>
    </location>
</feature>
<feature type="binding site" evidence="1">
    <location>
        <position position="39"/>
    </location>
    <ligand>
        <name>ATP</name>
        <dbReference type="ChEBI" id="CHEBI:30616"/>
    </ligand>
</feature>
<feature type="binding site" evidence="1">
    <location>
        <position position="81"/>
    </location>
    <ligand>
        <name>ATP</name>
        <dbReference type="ChEBI" id="CHEBI:30616"/>
    </ligand>
</feature>
<feature type="binding site" evidence="1">
    <location>
        <position position="100"/>
    </location>
    <ligand>
        <name>ATP</name>
        <dbReference type="ChEBI" id="CHEBI:30616"/>
    </ligand>
</feature>
<feature type="binding site" evidence="1">
    <location>
        <position position="126"/>
    </location>
    <ligand>
        <name>ATP</name>
        <dbReference type="ChEBI" id="CHEBI:30616"/>
    </ligand>
</feature>
<feature type="non-terminal residue">
    <location>
        <position position="375"/>
    </location>
</feature>
<sequence>MPEEAETFAFQAEIAQLMSLIINTFYSNKEIFLRELISNASDALDKIRYESLTDPSKLDSGKELYIKLIPNKTAGTLTIIDTGIGMTKSDLVNNLGTIAKSGTKAFMEALQAGADISMIGQFGVGFYSAYLVADKVTVTSKNNDDEQYVWESSAGGSFTVRADNSEPLGRGTKIVLYIKEDQTDYLEESKIKEIVNKHSQFIGYPIKLLVEKEREKEVSDDEADDEKKEGDEKKEMETDEPKIEDVGEDEDADKKDKDAKKKKTIKEKYTEDEELNKTKPIWTRNPDDISQEEYGEFYKSLTNDWEDHLAVKHFSVEGQLEFRALLFIPRRTPFDLFENQKKRNNIKLYVRRVFIMDNCEDLIPEYLNFMKGVVD</sequence>
<comment type="function">
    <text evidence="1">Molecular chaperone that promotes the maturation, structural maintenance and proper regulation of specific target proteins involved for instance in cell cycle control and signal transduction. Undergoes a functional cycle that is linked to its ATPase activity. This cycle probably induces conformational changes in the client proteins, thereby causing their activation. Interacts dynamically with various co-chaperones that modulate its substrate recognition, ATPase cycle and chaperone function. Required for piRNA biogenesis by facilitating loading of piRNAs into PIWI proteins (By similarity).</text>
</comment>
<comment type="subunit">
    <text evidence="1">Homodimer. Interacts with shu (By similarity).</text>
</comment>
<comment type="subcellular location">
    <subcellularLocation>
        <location>Cytoplasm</location>
    </subcellularLocation>
</comment>
<comment type="similarity">
    <text evidence="3">Belongs to the heat shock protein 90 family.</text>
</comment>
<organism>
    <name type="scientific">Drosophila simulans</name>
    <name type="common">Fruit fly</name>
    <dbReference type="NCBI Taxonomy" id="7240"/>
    <lineage>
        <taxon>Eukaryota</taxon>
        <taxon>Metazoa</taxon>
        <taxon>Ecdysozoa</taxon>
        <taxon>Arthropoda</taxon>
        <taxon>Hexapoda</taxon>
        <taxon>Insecta</taxon>
        <taxon>Pterygota</taxon>
        <taxon>Neoptera</taxon>
        <taxon>Endopterygota</taxon>
        <taxon>Diptera</taxon>
        <taxon>Brachycera</taxon>
        <taxon>Muscomorpha</taxon>
        <taxon>Ephydroidea</taxon>
        <taxon>Drosophilidae</taxon>
        <taxon>Drosophila</taxon>
        <taxon>Sophophora</taxon>
    </lineage>
</organism>
<accession>P04810</accession>
<proteinExistence type="inferred from homology"/>